<reference key="1">
    <citation type="submission" date="2004-11" db="EMBL/GenBank/DDBJ databases">
        <authorList>
            <consortium name="The German cDNA consortium"/>
        </authorList>
    </citation>
    <scope>NUCLEOTIDE SEQUENCE [LARGE SCALE MRNA]</scope>
    <source>
        <tissue>Brain cortex</tissue>
    </source>
</reference>
<accession>Q5R4B3</accession>
<keyword id="KW-0131">Cell cycle</keyword>
<keyword id="KW-0963">Cytoplasm</keyword>
<keyword id="KW-0342">GTP-binding</keyword>
<keyword id="KW-0378">Hydrolase</keyword>
<keyword id="KW-0866">Nonsense-mediated mRNA decay</keyword>
<keyword id="KW-0547">Nucleotide-binding</keyword>
<keyword id="KW-0648">Protein biosynthesis</keyword>
<keyword id="KW-1185">Reference proteome</keyword>
<name>ERF3B_PONAB</name>
<protein>
    <recommendedName>
        <fullName>Eukaryotic peptide chain release factor GTP-binding subunit ERF3B</fullName>
        <shortName>Eukaryotic peptide chain release factor subunit 3b</shortName>
        <shortName>eRF3b</shortName>
        <ecNumber evidence="2">3.6.5.-</ecNumber>
    </recommendedName>
    <alternativeName>
        <fullName>G1 to S phase transition protein 2 homolog</fullName>
    </alternativeName>
</protein>
<organism>
    <name type="scientific">Pongo abelii</name>
    <name type="common">Sumatran orangutan</name>
    <name type="synonym">Pongo pygmaeus abelii</name>
    <dbReference type="NCBI Taxonomy" id="9601"/>
    <lineage>
        <taxon>Eukaryota</taxon>
        <taxon>Metazoa</taxon>
        <taxon>Chordata</taxon>
        <taxon>Craniata</taxon>
        <taxon>Vertebrata</taxon>
        <taxon>Euteleostomi</taxon>
        <taxon>Mammalia</taxon>
        <taxon>Eutheria</taxon>
        <taxon>Euarchontoglires</taxon>
        <taxon>Primates</taxon>
        <taxon>Haplorrhini</taxon>
        <taxon>Catarrhini</taxon>
        <taxon>Hominidae</taxon>
        <taxon>Pongo</taxon>
    </lineage>
</organism>
<evidence type="ECO:0000250" key="1">
    <source>
        <dbReference type="UniProtKB" id="O74718"/>
    </source>
</evidence>
<evidence type="ECO:0000250" key="2">
    <source>
        <dbReference type="UniProtKB" id="Q8IYD1"/>
    </source>
</evidence>
<evidence type="ECO:0000255" key="3">
    <source>
        <dbReference type="PROSITE-ProRule" id="PRU01059"/>
    </source>
</evidence>
<evidence type="ECO:0000256" key="4">
    <source>
        <dbReference type="SAM" id="MobiDB-lite"/>
    </source>
</evidence>
<evidence type="ECO:0000305" key="5"/>
<comment type="function">
    <text evidence="2">GTPase component of the eRF1-eRF3-GTP ternary complex, a ternary complex that mediates translation termination in response to the termination codons UAA, UAG and UGA. GSPT2/ERF3B mediates ETF1/ERF1 delivery to stop codons: The eRF1-eRF3-GTP complex binds to a stop codon in the ribosomal A-site. GTP hydrolysis by GSPT2/ERF3B induces a conformational change that leads to its dissociation, permitting ETF1/ERF1 to accommodate fully in the A-site. Component of the transient SURF complex which recruits UPF1 to stalled ribosomes in the context of nonsense-mediated decay (NMD) of mRNAs containing premature stop codons.</text>
</comment>
<comment type="catalytic activity">
    <reaction evidence="2">
        <text>GTP + H2O = GDP + phosphate + H(+)</text>
        <dbReference type="Rhea" id="RHEA:19669"/>
        <dbReference type="ChEBI" id="CHEBI:15377"/>
        <dbReference type="ChEBI" id="CHEBI:15378"/>
        <dbReference type="ChEBI" id="CHEBI:37565"/>
        <dbReference type="ChEBI" id="CHEBI:43474"/>
        <dbReference type="ChEBI" id="CHEBI:58189"/>
    </reaction>
    <physiologicalReaction direction="left-to-right" evidence="2">
        <dbReference type="Rhea" id="RHEA:19670"/>
    </physiologicalReaction>
</comment>
<comment type="subunit">
    <text evidence="2">Component of the eRF1-eRF3-GTP ternary complex, composed of ETF1/ERF1 and ERF3 (GSPT1/ERF3A or GSPT2/ERF3B) and GTP. Component of the transient SURF (SMG1-UPF1-eRF1-eRF3) complex. Interacts with UPF1 and PABPC1.</text>
</comment>
<comment type="subcellular location">
    <subcellularLocation>
        <location evidence="5">Cytoplasm</location>
    </subcellularLocation>
</comment>
<comment type="similarity">
    <text evidence="3">Belongs to the TRAFAC class translation factor GTPase superfamily. Classic translation factor GTPase family. ERF3 subfamily.</text>
</comment>
<gene>
    <name type="primary">GSPT2</name>
    <name type="synonym">ERF3B</name>
</gene>
<feature type="chain" id="PRO_0000327258" description="Eukaryotic peptide chain release factor GTP-binding subunit ERF3B">
    <location>
        <begin position="1"/>
        <end position="628"/>
    </location>
</feature>
<feature type="domain" description="tr-type G" evidence="3">
    <location>
        <begin position="201"/>
        <end position="425"/>
    </location>
</feature>
<feature type="region of interest" description="Disordered" evidence="4">
    <location>
        <begin position="1"/>
        <end position="44"/>
    </location>
</feature>
<feature type="region of interest" description="Disordered" evidence="4">
    <location>
        <begin position="71"/>
        <end position="124"/>
    </location>
</feature>
<feature type="region of interest" description="Disordered" evidence="4">
    <location>
        <begin position="146"/>
        <end position="191"/>
    </location>
</feature>
<feature type="region of interest" description="G1" evidence="3">
    <location>
        <begin position="210"/>
        <end position="217"/>
    </location>
</feature>
<feature type="region of interest" description="G2" evidence="3">
    <location>
        <begin position="266"/>
        <end position="270"/>
    </location>
</feature>
<feature type="region of interest" description="G3" evidence="3">
    <location>
        <begin position="287"/>
        <end position="290"/>
    </location>
</feature>
<feature type="region of interest" description="G4" evidence="3">
    <location>
        <begin position="349"/>
        <end position="352"/>
    </location>
</feature>
<feature type="region of interest" description="G5" evidence="3">
    <location>
        <begin position="391"/>
        <end position="393"/>
    </location>
</feature>
<feature type="compositionally biased region" description="Low complexity" evidence="4">
    <location>
        <begin position="1"/>
        <end position="10"/>
    </location>
</feature>
<feature type="binding site" evidence="1">
    <location>
        <begin position="213"/>
        <end position="218"/>
    </location>
    <ligand>
        <name>GTP</name>
        <dbReference type="ChEBI" id="CHEBI:37565"/>
    </ligand>
</feature>
<feature type="binding site" evidence="1">
    <location>
        <begin position="349"/>
        <end position="352"/>
    </location>
    <ligand>
        <name>GTP</name>
        <dbReference type="ChEBI" id="CHEBI:37565"/>
    </ligand>
</feature>
<feature type="binding site" evidence="1">
    <location>
        <begin position="391"/>
        <end position="393"/>
    </location>
    <ligand>
        <name>GTP</name>
        <dbReference type="ChEBI" id="CHEBI:37565"/>
    </ligand>
</feature>
<sequence>MDSGSSSSDSAPDCWDQVDMEAPGSAPSGDGVSSAVAEAQREPLSSAFSRQLNVNAKPFVPNVHAAEFVPSFLRGPSQPPTLPAGSGSNDETCTGAGYPQGKRMGRGAPVEPSREEPLVSLEGSNSAVTMELSEPVVENGEVEMALEESWEHSKEVSEAEPGGGSSGDSGPPEESGQEMMEEKEEIRKSKSVIVPSGAPKKEHVNVVFIGHVDAGKSTIGGQIMFLTGMVDKRTLEKYEREAKEKNRETWYLSWALDTNQEERDKGKTVEVGRAYFETERKHFTILDAPGHKSFVPNMIGGASQADLAVLVISARKGEFETGFEKGGQTREHAMLAKTAGVKHLIVLINKMDDPTVNWSIERYEECKEKLVPFLKKVGFSPKKDIHFMPCSGLTGANVKEQSDFCPWYTGLPFIPYLDNLPNFNRSIDGPIRLPIVDKYKDMGTVVLGKLESGSIFKGQQLVMMPNKHNVEVLGILSDDTETDFVAPGENLKIRLKGIEEEEILPGFILCDPSNLCHSGRTFDVQIVIIEHKSIICPGYNAVLHIHTCIEEVEITALISLVDKKSGEKSKTRPRFVKQDQVCIARLRTAGTICLETFKDFPQMGRFTLRDEGKTIAIGKVLKLVPEKD</sequence>
<proteinExistence type="evidence at transcript level"/>
<dbReference type="EC" id="3.6.5.-" evidence="2"/>
<dbReference type="EMBL" id="CR861342">
    <property type="protein sequence ID" value="CAH93403.1"/>
    <property type="molecule type" value="mRNA"/>
</dbReference>
<dbReference type="RefSeq" id="NP_001126997.1">
    <property type="nucleotide sequence ID" value="NM_001133525.1"/>
</dbReference>
<dbReference type="BMRB" id="Q5R4B3"/>
<dbReference type="SMR" id="Q5R4B3"/>
<dbReference type="FunCoup" id="Q5R4B3">
    <property type="interactions" value="995"/>
</dbReference>
<dbReference type="STRING" id="9601.ENSPPYP00000022791"/>
<dbReference type="GeneID" id="100174020"/>
<dbReference type="KEGG" id="pon:100174020"/>
<dbReference type="CTD" id="23708"/>
<dbReference type="eggNOG" id="KOG0459">
    <property type="taxonomic scope" value="Eukaryota"/>
</dbReference>
<dbReference type="InParanoid" id="Q5R4B3"/>
<dbReference type="OrthoDB" id="342024at2759"/>
<dbReference type="Proteomes" id="UP000001595">
    <property type="component" value="Unplaced"/>
</dbReference>
<dbReference type="GO" id="GO:0005737">
    <property type="term" value="C:cytoplasm"/>
    <property type="evidence" value="ECO:0007669"/>
    <property type="project" value="UniProtKB-SubCell"/>
</dbReference>
<dbReference type="GO" id="GO:0005525">
    <property type="term" value="F:GTP binding"/>
    <property type="evidence" value="ECO:0007669"/>
    <property type="project" value="UniProtKB-KW"/>
</dbReference>
<dbReference type="GO" id="GO:0003924">
    <property type="term" value="F:GTPase activity"/>
    <property type="evidence" value="ECO:0007669"/>
    <property type="project" value="InterPro"/>
</dbReference>
<dbReference type="GO" id="GO:0000184">
    <property type="term" value="P:nuclear-transcribed mRNA catabolic process, nonsense-mediated decay"/>
    <property type="evidence" value="ECO:0007669"/>
    <property type="project" value="UniProtKB-KW"/>
</dbReference>
<dbReference type="GO" id="GO:0006412">
    <property type="term" value="P:translation"/>
    <property type="evidence" value="ECO:0007669"/>
    <property type="project" value="UniProtKB-KW"/>
</dbReference>
<dbReference type="CDD" id="cd01883">
    <property type="entry name" value="EF1_alpha"/>
    <property type="match status" value="1"/>
</dbReference>
<dbReference type="CDD" id="cd03704">
    <property type="entry name" value="eRF3_C_III"/>
    <property type="match status" value="1"/>
</dbReference>
<dbReference type="CDD" id="cd04089">
    <property type="entry name" value="eRF3_II"/>
    <property type="match status" value="1"/>
</dbReference>
<dbReference type="FunFam" id="2.40.30.10:FF:000017">
    <property type="entry name" value="Eukaryotic peptide chain release factor GTP-binding subunit"/>
    <property type="match status" value="1"/>
</dbReference>
<dbReference type="FunFam" id="2.40.30.10:FF:000024">
    <property type="entry name" value="Eukaryotic peptide chain release factor GTP-binding subunit ERF3A"/>
    <property type="match status" value="1"/>
</dbReference>
<dbReference type="FunFam" id="3.40.50.300:FF:000270">
    <property type="entry name" value="Eukaryotic peptide chain release factor GTP-binding subunit ERF3A"/>
    <property type="match status" value="1"/>
</dbReference>
<dbReference type="Gene3D" id="3.40.50.300">
    <property type="entry name" value="P-loop containing nucleotide triphosphate hydrolases"/>
    <property type="match status" value="1"/>
</dbReference>
<dbReference type="Gene3D" id="2.40.30.10">
    <property type="entry name" value="Translation factors"/>
    <property type="match status" value="2"/>
</dbReference>
<dbReference type="InterPro" id="IPR004161">
    <property type="entry name" value="EFTu-like_2"/>
</dbReference>
<dbReference type="InterPro" id="IPR031157">
    <property type="entry name" value="G_TR_CS"/>
</dbReference>
<dbReference type="InterPro" id="IPR054696">
    <property type="entry name" value="GTP-eEF1A_C"/>
</dbReference>
<dbReference type="InterPro" id="IPR027417">
    <property type="entry name" value="P-loop_NTPase"/>
</dbReference>
<dbReference type="InterPro" id="IPR009818">
    <property type="entry name" value="PAM2_motif"/>
</dbReference>
<dbReference type="InterPro" id="IPR000795">
    <property type="entry name" value="T_Tr_GTP-bd_dom"/>
</dbReference>
<dbReference type="InterPro" id="IPR050100">
    <property type="entry name" value="TRAFAC_GTPase_members"/>
</dbReference>
<dbReference type="InterPro" id="IPR009000">
    <property type="entry name" value="Transl_B-barrel_sf"/>
</dbReference>
<dbReference type="InterPro" id="IPR009001">
    <property type="entry name" value="Transl_elong_EF1A/Init_IF2_C"/>
</dbReference>
<dbReference type="PANTHER" id="PTHR23115">
    <property type="entry name" value="TRANSLATION FACTOR"/>
    <property type="match status" value="1"/>
</dbReference>
<dbReference type="Pfam" id="PF22594">
    <property type="entry name" value="GTP-eEF1A_C"/>
    <property type="match status" value="1"/>
</dbReference>
<dbReference type="Pfam" id="PF00009">
    <property type="entry name" value="GTP_EFTU"/>
    <property type="match status" value="1"/>
</dbReference>
<dbReference type="Pfam" id="PF03144">
    <property type="entry name" value="GTP_EFTU_D2"/>
    <property type="match status" value="1"/>
</dbReference>
<dbReference type="Pfam" id="PF07145">
    <property type="entry name" value="PAM2"/>
    <property type="match status" value="1"/>
</dbReference>
<dbReference type="PRINTS" id="PR00315">
    <property type="entry name" value="ELONGATNFCT"/>
</dbReference>
<dbReference type="SUPFAM" id="SSF50465">
    <property type="entry name" value="EF-Tu/eEF-1alpha/eIF2-gamma C-terminal domain"/>
    <property type="match status" value="1"/>
</dbReference>
<dbReference type="SUPFAM" id="SSF52540">
    <property type="entry name" value="P-loop containing nucleoside triphosphate hydrolases"/>
    <property type="match status" value="1"/>
</dbReference>
<dbReference type="SUPFAM" id="SSF50447">
    <property type="entry name" value="Translation proteins"/>
    <property type="match status" value="1"/>
</dbReference>
<dbReference type="PROSITE" id="PS00301">
    <property type="entry name" value="G_TR_1"/>
    <property type="match status" value="1"/>
</dbReference>
<dbReference type="PROSITE" id="PS51722">
    <property type="entry name" value="G_TR_2"/>
    <property type="match status" value="1"/>
</dbReference>